<organism>
    <name type="scientific">Landoltia punctata</name>
    <name type="common">Dotted duckmeat</name>
    <name type="synonym">Spirodela oligorrhiza</name>
    <dbReference type="NCBI Taxonomy" id="50518"/>
    <lineage>
        <taxon>Eukaryota</taxon>
        <taxon>Viridiplantae</taxon>
        <taxon>Streptophyta</taxon>
        <taxon>Embryophyta</taxon>
        <taxon>Tracheophyta</taxon>
        <taxon>Spermatophyta</taxon>
        <taxon>Magnoliopsida</taxon>
        <taxon>Liliopsida</taxon>
        <taxon>Araceae</taxon>
        <taxon>Lemnoideae</taxon>
        <taxon>Landoltia</taxon>
    </lineage>
</organism>
<gene>
    <name evidence="1" type="primary">rpl16</name>
</gene>
<keyword id="KW-0150">Chloroplast</keyword>
<keyword id="KW-0934">Plastid</keyword>
<keyword id="KW-0687">Ribonucleoprotein</keyword>
<keyword id="KW-0689">Ribosomal protein</keyword>
<sequence length="135" mass="15446">MLSPKRTRFRKQHRGRMKGKSYRGNHISFGRYALQAVEPAWITARQIEAGRRAISRYARRGGKIWVRLFPDKRVTLRPAETRMGSGKGSPEYWVSVVKPGRILYEIGGVSETVARTAMLLAASKMPIRTQFIIEE</sequence>
<evidence type="ECO:0000255" key="1">
    <source>
        <dbReference type="HAMAP-Rule" id="MF_01342"/>
    </source>
</evidence>
<evidence type="ECO:0000256" key="2">
    <source>
        <dbReference type="SAM" id="MobiDB-lite"/>
    </source>
</evidence>
<evidence type="ECO:0000305" key="3"/>
<reference key="1">
    <citation type="journal article" date="1986" name="Nucleic Acids Res.">
        <title>The gene for Spirodela oligorhiza chloroplast ribosomal protein homologous to E. coli ribosomal protein L16 is split by a large intron near its 5' end: structure and expression.</title>
        <authorList>
            <person name="Posno M."/>
            <person name="van Vliet A."/>
            <person name="Groot G.S.P."/>
        </authorList>
    </citation>
    <scope>NUCLEOTIDE SEQUENCE [GENOMIC DNA]</scope>
</reference>
<accession>P06510</accession>
<comment type="subunit">
    <text evidence="1">Part of the 50S ribosomal subunit.</text>
</comment>
<comment type="subcellular location">
    <subcellularLocation>
        <location>Plastid</location>
        <location>Chloroplast</location>
    </subcellularLocation>
</comment>
<comment type="similarity">
    <text evidence="1">Belongs to the universal ribosomal protein uL16 family.</text>
</comment>
<comment type="sequence caution" evidence="3">
    <conflict type="erroneous initiation">
        <sequence resource="EMBL-CDS" id="CAA27450"/>
    </conflict>
</comment>
<dbReference type="EMBL" id="X03834">
    <property type="protein sequence ID" value="CAA27449.1"/>
    <property type="molecule type" value="Genomic_DNA"/>
</dbReference>
<dbReference type="EMBL" id="X03834">
    <property type="protein sequence ID" value="CAA27450.1"/>
    <property type="status" value="ALT_INIT"/>
    <property type="molecule type" value="Genomic_DNA"/>
</dbReference>
<dbReference type="PIR" id="A24916">
    <property type="entry name" value="A24916"/>
</dbReference>
<dbReference type="SMR" id="P06510"/>
<dbReference type="GO" id="GO:0009507">
    <property type="term" value="C:chloroplast"/>
    <property type="evidence" value="ECO:0007669"/>
    <property type="project" value="UniProtKB-SubCell"/>
</dbReference>
<dbReference type="GO" id="GO:0005762">
    <property type="term" value="C:mitochondrial large ribosomal subunit"/>
    <property type="evidence" value="ECO:0007669"/>
    <property type="project" value="TreeGrafter"/>
</dbReference>
<dbReference type="GO" id="GO:0019843">
    <property type="term" value="F:rRNA binding"/>
    <property type="evidence" value="ECO:0007669"/>
    <property type="project" value="InterPro"/>
</dbReference>
<dbReference type="GO" id="GO:0003735">
    <property type="term" value="F:structural constituent of ribosome"/>
    <property type="evidence" value="ECO:0007669"/>
    <property type="project" value="InterPro"/>
</dbReference>
<dbReference type="GO" id="GO:0032543">
    <property type="term" value="P:mitochondrial translation"/>
    <property type="evidence" value="ECO:0007669"/>
    <property type="project" value="TreeGrafter"/>
</dbReference>
<dbReference type="CDD" id="cd01433">
    <property type="entry name" value="Ribosomal_L16_L10e"/>
    <property type="match status" value="1"/>
</dbReference>
<dbReference type="FunFam" id="3.90.1170.10:FF:000001">
    <property type="entry name" value="50S ribosomal protein L16"/>
    <property type="match status" value="1"/>
</dbReference>
<dbReference type="Gene3D" id="3.90.1170.10">
    <property type="entry name" value="Ribosomal protein L10e/L16"/>
    <property type="match status" value="1"/>
</dbReference>
<dbReference type="HAMAP" id="MF_01342">
    <property type="entry name" value="Ribosomal_uL16"/>
    <property type="match status" value="1"/>
</dbReference>
<dbReference type="InterPro" id="IPR047873">
    <property type="entry name" value="Ribosomal_uL16"/>
</dbReference>
<dbReference type="InterPro" id="IPR000114">
    <property type="entry name" value="Ribosomal_uL16_bact-type"/>
</dbReference>
<dbReference type="InterPro" id="IPR020798">
    <property type="entry name" value="Ribosomal_uL16_CS"/>
</dbReference>
<dbReference type="InterPro" id="IPR016180">
    <property type="entry name" value="Ribosomal_uL16_dom"/>
</dbReference>
<dbReference type="InterPro" id="IPR036920">
    <property type="entry name" value="Ribosomal_uL16_sf"/>
</dbReference>
<dbReference type="NCBIfam" id="TIGR01164">
    <property type="entry name" value="rplP_bact"/>
    <property type="match status" value="1"/>
</dbReference>
<dbReference type="PANTHER" id="PTHR12220">
    <property type="entry name" value="50S/60S RIBOSOMAL PROTEIN L16"/>
    <property type="match status" value="1"/>
</dbReference>
<dbReference type="PANTHER" id="PTHR12220:SF13">
    <property type="entry name" value="LARGE RIBOSOMAL SUBUNIT PROTEIN UL16M"/>
    <property type="match status" value="1"/>
</dbReference>
<dbReference type="Pfam" id="PF00252">
    <property type="entry name" value="Ribosomal_L16"/>
    <property type="match status" value="1"/>
</dbReference>
<dbReference type="PRINTS" id="PR00060">
    <property type="entry name" value="RIBOSOMALL16"/>
</dbReference>
<dbReference type="SUPFAM" id="SSF54686">
    <property type="entry name" value="Ribosomal protein L16p/L10e"/>
    <property type="match status" value="1"/>
</dbReference>
<dbReference type="PROSITE" id="PS00586">
    <property type="entry name" value="RIBOSOMAL_L16_1"/>
    <property type="match status" value="1"/>
</dbReference>
<dbReference type="PROSITE" id="PS00701">
    <property type="entry name" value="RIBOSOMAL_L16_2"/>
    <property type="match status" value="1"/>
</dbReference>
<name>RK16_LANPU</name>
<geneLocation type="chloroplast"/>
<protein>
    <recommendedName>
        <fullName evidence="1">Large ribosomal subunit protein uL16c</fullName>
    </recommendedName>
    <alternativeName>
        <fullName evidence="3">50S ribosomal protein L16, chloroplastic</fullName>
    </alternativeName>
</protein>
<proteinExistence type="inferred from homology"/>
<feature type="chain" id="PRO_0000062314" description="Large ribosomal subunit protein uL16c">
    <location>
        <begin position="1"/>
        <end position="135"/>
    </location>
</feature>
<feature type="region of interest" description="Disordered" evidence="2">
    <location>
        <begin position="1"/>
        <end position="20"/>
    </location>
</feature>